<dbReference type="EMBL" id="J05672">
    <property type="protein sequence ID" value="AAA63791.1"/>
    <property type="molecule type" value="Genomic_DNA"/>
</dbReference>
<dbReference type="PIR" id="A23667">
    <property type="entry name" value="A23667"/>
</dbReference>
<dbReference type="SMR" id="P21245"/>
<dbReference type="GO" id="GO:0005778">
    <property type="term" value="C:peroxisomal membrane"/>
    <property type="evidence" value="ECO:0007669"/>
    <property type="project" value="UniProtKB-SubCell"/>
</dbReference>
<dbReference type="GO" id="GO:0015217">
    <property type="term" value="F:ADP transmembrane transporter activity"/>
    <property type="evidence" value="ECO:0007669"/>
    <property type="project" value="TreeGrafter"/>
</dbReference>
<dbReference type="GO" id="GO:0080122">
    <property type="term" value="F:AMP transmembrane transporter activity"/>
    <property type="evidence" value="ECO:0007669"/>
    <property type="project" value="TreeGrafter"/>
</dbReference>
<dbReference type="GO" id="GO:0005347">
    <property type="term" value="F:ATP transmembrane transporter activity"/>
    <property type="evidence" value="ECO:0007669"/>
    <property type="project" value="TreeGrafter"/>
</dbReference>
<dbReference type="GO" id="GO:0015228">
    <property type="term" value="F:coenzyme A transmembrane transporter activity"/>
    <property type="evidence" value="ECO:0007669"/>
    <property type="project" value="TreeGrafter"/>
</dbReference>
<dbReference type="GO" id="GO:0015230">
    <property type="term" value="F:FAD transmembrane transporter activity"/>
    <property type="evidence" value="ECO:0007669"/>
    <property type="project" value="TreeGrafter"/>
</dbReference>
<dbReference type="GO" id="GO:0044610">
    <property type="term" value="F:FMN transmembrane transporter activity"/>
    <property type="evidence" value="ECO:0007669"/>
    <property type="project" value="TreeGrafter"/>
</dbReference>
<dbReference type="GO" id="GO:0051724">
    <property type="term" value="F:NAD transmembrane transporter activity"/>
    <property type="evidence" value="ECO:0007669"/>
    <property type="project" value="TreeGrafter"/>
</dbReference>
<dbReference type="Gene3D" id="1.50.40.10">
    <property type="entry name" value="Mitochondrial carrier domain"/>
    <property type="match status" value="1"/>
</dbReference>
<dbReference type="InterPro" id="IPR052217">
    <property type="entry name" value="Mito/Peroxisomal_Carrier"/>
</dbReference>
<dbReference type="InterPro" id="IPR018108">
    <property type="entry name" value="Mitochondrial_sb/sol_carrier"/>
</dbReference>
<dbReference type="InterPro" id="IPR023395">
    <property type="entry name" value="Mt_carrier_dom_sf"/>
</dbReference>
<dbReference type="PANTHER" id="PTHR45939:SF5">
    <property type="entry name" value="PEROXISOMAL MEMBRANE PROTEIN PMP34"/>
    <property type="match status" value="1"/>
</dbReference>
<dbReference type="PANTHER" id="PTHR45939">
    <property type="entry name" value="PEROXISOMAL MEMBRANE PROTEIN PMP34-RELATED"/>
    <property type="match status" value="1"/>
</dbReference>
<dbReference type="Pfam" id="PF00153">
    <property type="entry name" value="Mito_carr"/>
    <property type="match status" value="3"/>
</dbReference>
<dbReference type="SUPFAM" id="SSF103506">
    <property type="entry name" value="Mitochondrial carrier"/>
    <property type="match status" value="1"/>
</dbReference>
<dbReference type="PROSITE" id="PS50920">
    <property type="entry name" value="SOLCAR"/>
    <property type="match status" value="3"/>
</dbReference>
<name>PM47A_CANBO</name>
<comment type="function">
    <text>May have transport activity.</text>
</comment>
<comment type="subcellular location">
    <subcellularLocation>
        <location>Peroxisome membrane</location>
        <topology>Multi-pass membrane protein</topology>
    </subcellularLocation>
</comment>
<comment type="domain">
    <text>Lacks a typical peroxisomal sorting signal.</text>
</comment>
<comment type="similarity">
    <text evidence="3">Belongs to the mitochondrial carrier (TC 2.A.29) family.</text>
</comment>
<accession>P21245</accession>
<protein>
    <recommendedName>
        <fullName>Peroxisomal membrane protein PMP47A</fullName>
    </recommendedName>
</protein>
<proteinExistence type="evidence at protein level"/>
<gene>
    <name type="primary">PMP47A</name>
</gene>
<feature type="chain" id="PRO_0000090707" description="Peroxisomal membrane protein PMP47A">
    <location>
        <begin position="1"/>
        <end position="423"/>
    </location>
</feature>
<feature type="transmembrane region" description="Helical; Name=1" evidence="1">
    <location>
        <begin position="12"/>
        <end position="32"/>
    </location>
</feature>
<feature type="transmembrane region" description="Helical; Name=2" evidence="1">
    <location>
        <begin position="98"/>
        <end position="118"/>
    </location>
</feature>
<feature type="transmembrane region" description="Helical; Name=3" evidence="1">
    <location>
        <begin position="148"/>
        <end position="168"/>
    </location>
</feature>
<feature type="transmembrane region" description="Helical; Name=4" evidence="1">
    <location>
        <begin position="204"/>
        <end position="224"/>
    </location>
</feature>
<feature type="transmembrane region" description="Helical; Name=5" evidence="1">
    <location>
        <begin position="245"/>
        <end position="265"/>
    </location>
</feature>
<feature type="transmembrane region" description="Helical; Name=6" evidence="1">
    <location>
        <begin position="353"/>
        <end position="373"/>
    </location>
</feature>
<feature type="repeat" description="Solcar 1">
    <location>
        <begin position="6"/>
        <end position="120"/>
    </location>
</feature>
<feature type="repeat" description="Solcar 2">
    <location>
        <begin position="142"/>
        <end position="230"/>
    </location>
</feature>
<feature type="repeat" description="Solcar 3">
    <location>
        <begin position="239"/>
        <end position="373"/>
    </location>
</feature>
<feature type="region of interest" description="Disordered" evidence="2">
    <location>
        <begin position="43"/>
        <end position="70"/>
    </location>
</feature>
<feature type="region of interest" description="Disordered" evidence="2">
    <location>
        <begin position="278"/>
        <end position="308"/>
    </location>
</feature>
<feature type="compositionally biased region" description="Basic and acidic residues" evidence="2">
    <location>
        <begin position="43"/>
        <end position="53"/>
    </location>
</feature>
<feature type="compositionally biased region" description="Polar residues" evidence="2">
    <location>
        <begin position="55"/>
        <end position="70"/>
    </location>
</feature>
<keyword id="KW-0903">Direct protein sequencing</keyword>
<keyword id="KW-0472">Membrane</keyword>
<keyword id="KW-0576">Peroxisome</keyword>
<keyword id="KW-0677">Repeat</keyword>
<keyword id="KW-0812">Transmembrane</keyword>
<keyword id="KW-1133">Transmembrane helix</keyword>
<keyword id="KW-0813">Transport</keyword>
<reference key="1">
    <citation type="journal article" date="1990" name="J. Biol. Chem.">
        <title>Sorting of peroxisomal membrane protein PMP47 from Candida boidinii into peroxisomal membranes of Saccharomyces cerevisiae.</title>
        <authorList>
            <person name="McCammon M.T."/>
            <person name="Dowds C.A."/>
            <person name="Orth K."/>
            <person name="Moomaw C.R."/>
            <person name="Slaughter C.A."/>
            <person name="Goodman J.M."/>
        </authorList>
    </citation>
    <scope>NUCLEOTIDE SEQUENCE [GENOMIC DNA]</scope>
    <scope>PARTIAL PROTEIN SEQUENCE</scope>
    <source>
        <strain>ATCC 32195</strain>
    </source>
</reference>
<reference key="2">
    <citation type="journal article" date="1993" name="Trends Biochem. Sci.">
        <title>PMP47, a peroxisomal homologue of mitochondrial solute carrier proteins.</title>
        <authorList>
            <person name="Jank B."/>
            <person name="Habermann B."/>
            <person name="Schweyen R.J."/>
            <person name="Link T.A."/>
        </authorList>
    </citation>
    <scope>SIMILARITY TO MITOCHONDRIAL CARRIER FAMILY</scope>
</reference>
<organism>
    <name type="scientific">Candida boidinii</name>
    <name type="common">Yeast</name>
    <dbReference type="NCBI Taxonomy" id="5477"/>
    <lineage>
        <taxon>Eukaryota</taxon>
        <taxon>Fungi</taxon>
        <taxon>Dikarya</taxon>
        <taxon>Ascomycota</taxon>
        <taxon>Saccharomycotina</taxon>
        <taxon>Pichiomycetes</taxon>
        <taxon>Pichiales</taxon>
        <taxon>Pichiaceae</taxon>
        <taxon>Ogataea</taxon>
        <taxon>Ogataea/Candida clade</taxon>
    </lineage>
</organism>
<evidence type="ECO:0000255" key="1"/>
<evidence type="ECO:0000256" key="2">
    <source>
        <dbReference type="SAM" id="MobiDB-lite"/>
    </source>
</evidence>
<evidence type="ECO:0000305" key="3"/>
<sequence length="423" mass="46873">MSTREYDDLSHAFAGAGGGLLSMTLTYPLVTLTTHAQTMVKLKKDQEKEKENSNEDGSLSPKSSNTSDVSQKKISQFEILKKILKDQGAKGLYNGLESALFGIAVTNFVYYYFYELTGKTLNRRSNPQTASNSKKVALKKGLSVWQSMAAGAVAGTISRVATNPIWVANTRMTILSKNQGKLGKLNTIEAIIYILKNEGWQKLFTGIVPALFLVLNPIIQYTIFEQLKSFIVKIKKRNITPVDALLLGAFGKLIATIITYPYITLRSRMHVKSMTEISEDVEKERTDSVQSLPEDGSDEDNLKENSAKSPYAETITKIISKLPSPIVSMFTLGYGMYKEEGVSSFYRGLSVKLLQSILNAAFLFYFKEELLILSDGIIKSTKRATGLANNPYNAKDVIHSFEKALSMRSPRTRTTTVASSAKE</sequence>